<gene>
    <name evidence="7" type="primary">FUS4</name>
    <name type="ORF">FVEG_11083</name>
</gene>
<accession>W7MX26</accession>
<protein>
    <recommendedName>
        <fullName evidence="7">Secreted aspartic protease FUS4</fullName>
        <ecNumber evidence="8">3.4.23.-</ecNumber>
    </recommendedName>
    <alternativeName>
        <fullName evidence="7">Fusarin biosynthesis protein 4</fullName>
    </alternativeName>
</protein>
<evidence type="ECO:0000250" key="1">
    <source>
        <dbReference type="UniProtKB" id="D4ATH2"/>
    </source>
</evidence>
<evidence type="ECO:0000250" key="2">
    <source>
        <dbReference type="UniProtKB" id="S0ELJ9"/>
    </source>
</evidence>
<evidence type="ECO:0000255" key="3"/>
<evidence type="ECO:0000255" key="4">
    <source>
        <dbReference type="PROSITE-ProRule" id="PRU00498"/>
    </source>
</evidence>
<evidence type="ECO:0000255" key="5">
    <source>
        <dbReference type="PROSITE-ProRule" id="PRU01103"/>
    </source>
</evidence>
<evidence type="ECO:0000269" key="6">
    <source>
    </source>
</evidence>
<evidence type="ECO:0000303" key="7">
    <source>
    </source>
</evidence>
<evidence type="ECO:0000305" key="8"/>
<keyword id="KW-0064">Aspartyl protease</keyword>
<keyword id="KW-1015">Disulfide bond</keyword>
<keyword id="KW-0325">Glycoprotein</keyword>
<keyword id="KW-0378">Hydrolase</keyword>
<keyword id="KW-0645">Protease</keyword>
<keyword id="KW-1185">Reference proteome</keyword>
<keyword id="KW-0964">Secreted</keyword>
<keyword id="KW-0732">Signal</keyword>
<comment type="function">
    <text evidence="2 6">Secreted aspartic protease; part of the gene cluster that mediates the biosynthesis of the mycotoxin fusarin C (PubMed:22652150). Within the cluster, FUS1, FUS2, FUS8 and FUS9 are sufficient for fusarin production (By similarity). The other FUS cluster members are not essential for fusarin C biosynthesis (By similarity).</text>
</comment>
<comment type="subcellular location">
    <subcellularLocation>
        <location evidence="1">Secreted</location>
    </subcellularLocation>
</comment>
<comment type="similarity">
    <text evidence="5">Belongs to the peptidase A1 family.</text>
</comment>
<feature type="signal peptide" evidence="3">
    <location>
        <begin position="1"/>
        <end position="22"/>
    </location>
</feature>
<feature type="chain" id="PRO_5004896697" description="Secreted aspartic protease FUS4">
    <location>
        <begin position="23"/>
        <end position="439"/>
    </location>
</feature>
<feature type="domain" description="Peptidase A1" evidence="5">
    <location>
        <begin position="49"/>
        <end position="434"/>
    </location>
</feature>
<feature type="active site" evidence="5">
    <location>
        <position position="67"/>
    </location>
</feature>
<feature type="active site" evidence="5">
    <location>
        <position position="296"/>
    </location>
</feature>
<feature type="glycosylation site" description="N-linked (GlcNAc...) asparagine" evidence="4">
    <location>
        <position position="52"/>
    </location>
</feature>
<feature type="glycosylation site" description="N-linked (GlcNAc...) asparagine" evidence="4">
    <location>
        <position position="61"/>
    </location>
</feature>
<feature type="glycosylation site" description="N-linked (GlcNAc...) asparagine" evidence="4">
    <location>
        <position position="101"/>
    </location>
</feature>
<feature type="glycosylation site" description="N-linked (GlcNAc...) asparagine" evidence="4">
    <location>
        <position position="107"/>
    </location>
</feature>
<feature type="glycosylation site" description="N-linked (GlcNAc...) asparagine" evidence="4">
    <location>
        <position position="123"/>
    </location>
</feature>
<feature type="disulfide bond" evidence="5">
    <location>
        <begin position="352"/>
        <end position="390"/>
    </location>
</feature>
<reference key="1">
    <citation type="journal article" date="2010" name="Nature">
        <title>Comparative genomics reveals mobile pathogenicity chromosomes in Fusarium.</title>
        <authorList>
            <person name="Ma L.-J."/>
            <person name="van der Does H.C."/>
            <person name="Borkovich K.A."/>
            <person name="Coleman J.J."/>
            <person name="Daboussi M.-J."/>
            <person name="Di Pietro A."/>
            <person name="Dufresne M."/>
            <person name="Freitag M."/>
            <person name="Grabherr M."/>
            <person name="Henrissat B."/>
            <person name="Houterman P.M."/>
            <person name="Kang S."/>
            <person name="Shim W.-B."/>
            <person name="Woloshuk C."/>
            <person name="Xie X."/>
            <person name="Xu J.-R."/>
            <person name="Antoniw J."/>
            <person name="Baker S.E."/>
            <person name="Bluhm B.H."/>
            <person name="Breakspear A."/>
            <person name="Brown D.W."/>
            <person name="Butchko R.A.E."/>
            <person name="Chapman S."/>
            <person name="Coulson R."/>
            <person name="Coutinho P.M."/>
            <person name="Danchin E.G.J."/>
            <person name="Diener A."/>
            <person name="Gale L.R."/>
            <person name="Gardiner D.M."/>
            <person name="Goff S."/>
            <person name="Hammond-Kosack K.E."/>
            <person name="Hilburn K."/>
            <person name="Hua-Van A."/>
            <person name="Jonkers W."/>
            <person name="Kazan K."/>
            <person name="Kodira C.D."/>
            <person name="Koehrsen M."/>
            <person name="Kumar L."/>
            <person name="Lee Y.-H."/>
            <person name="Li L."/>
            <person name="Manners J.M."/>
            <person name="Miranda-Saavedra D."/>
            <person name="Mukherjee M."/>
            <person name="Park G."/>
            <person name="Park J."/>
            <person name="Park S.-Y."/>
            <person name="Proctor R.H."/>
            <person name="Regev A."/>
            <person name="Ruiz-Roldan M.C."/>
            <person name="Sain D."/>
            <person name="Sakthikumar S."/>
            <person name="Sykes S."/>
            <person name="Schwartz D.C."/>
            <person name="Turgeon B.G."/>
            <person name="Wapinski I."/>
            <person name="Yoder O."/>
            <person name="Young S."/>
            <person name="Zeng Q."/>
            <person name="Zhou S."/>
            <person name="Galagan J."/>
            <person name="Cuomo C.A."/>
            <person name="Kistler H.C."/>
            <person name="Rep M."/>
        </authorList>
    </citation>
    <scope>NUCLEOTIDE SEQUENCE [LARGE SCALE GENOMIC DNA]</scope>
    <source>
        <strain>M3125 / FGSC 7600</strain>
    </source>
</reference>
<reference key="2">
    <citation type="journal article" date="2012" name="Fungal Genet. Biol.">
        <title>Identification of gene clusters associated with fusaric acid, fusarin, and perithecial pigment production in Fusarium verticillioides.</title>
        <authorList>
            <person name="Brown D.W."/>
            <person name="Butchko R.A."/>
            <person name="Busman M."/>
            <person name="Proctor R.H."/>
        </authorList>
    </citation>
    <scope>FUNCTION</scope>
</reference>
<organism>
    <name type="scientific">Gibberella moniliformis (strain M3125 / FGSC 7600)</name>
    <name type="common">Maize ear and stalk rot fungus</name>
    <name type="synonym">Fusarium verticillioides</name>
    <dbReference type="NCBI Taxonomy" id="334819"/>
    <lineage>
        <taxon>Eukaryota</taxon>
        <taxon>Fungi</taxon>
        <taxon>Dikarya</taxon>
        <taxon>Ascomycota</taxon>
        <taxon>Pezizomycotina</taxon>
        <taxon>Sordariomycetes</taxon>
        <taxon>Hypocreomycetidae</taxon>
        <taxon>Hypocreales</taxon>
        <taxon>Nectriaceae</taxon>
        <taxon>Fusarium</taxon>
        <taxon>Fusarium fujikuroi species complex</taxon>
    </lineage>
</organism>
<name>FUS4_GIBM7</name>
<dbReference type="EC" id="3.4.23.-" evidence="8"/>
<dbReference type="EMBL" id="CM000586">
    <property type="protein sequence ID" value="EWG52305.1"/>
    <property type="molecule type" value="Genomic_DNA"/>
</dbReference>
<dbReference type="RefSeq" id="XP_018758496.1">
    <property type="nucleotide sequence ID" value="XM_018900246.1"/>
</dbReference>
<dbReference type="SMR" id="W7MX26"/>
<dbReference type="GlyCosmos" id="W7MX26">
    <property type="glycosylation" value="5 sites, No reported glycans"/>
</dbReference>
<dbReference type="EnsemblFungi" id="FVEG_11083T0">
    <property type="protein sequence ID" value="FVEG_11083T0"/>
    <property type="gene ID" value="FVEG_11083"/>
</dbReference>
<dbReference type="GeneID" id="30068619"/>
<dbReference type="KEGG" id="fvr:FVEG_11083"/>
<dbReference type="VEuPathDB" id="FungiDB:FVEG_11083"/>
<dbReference type="eggNOG" id="ENOG502SJHI">
    <property type="taxonomic scope" value="Eukaryota"/>
</dbReference>
<dbReference type="HOGENOM" id="CLU_039077_0_0_1"/>
<dbReference type="OMA" id="FVDWTWI"/>
<dbReference type="OrthoDB" id="84315at110618"/>
<dbReference type="Proteomes" id="UP000009096">
    <property type="component" value="Chromosome 9"/>
</dbReference>
<dbReference type="GO" id="GO:0005576">
    <property type="term" value="C:extracellular region"/>
    <property type="evidence" value="ECO:0007669"/>
    <property type="project" value="UniProtKB-SubCell"/>
</dbReference>
<dbReference type="GO" id="GO:0004190">
    <property type="term" value="F:aspartic-type endopeptidase activity"/>
    <property type="evidence" value="ECO:0007669"/>
    <property type="project" value="UniProtKB-KW"/>
</dbReference>
<dbReference type="GO" id="GO:0006508">
    <property type="term" value="P:proteolysis"/>
    <property type="evidence" value="ECO:0007669"/>
    <property type="project" value="UniProtKB-KW"/>
</dbReference>
<dbReference type="CDD" id="cd05471">
    <property type="entry name" value="pepsin_like"/>
    <property type="match status" value="1"/>
</dbReference>
<dbReference type="Gene3D" id="2.40.70.10">
    <property type="entry name" value="Acid Proteases"/>
    <property type="match status" value="2"/>
</dbReference>
<dbReference type="InterPro" id="IPR001461">
    <property type="entry name" value="Aspartic_peptidase_A1"/>
</dbReference>
<dbReference type="InterPro" id="IPR034164">
    <property type="entry name" value="Pepsin-like_dom"/>
</dbReference>
<dbReference type="InterPro" id="IPR033121">
    <property type="entry name" value="PEPTIDASE_A1"/>
</dbReference>
<dbReference type="InterPro" id="IPR021109">
    <property type="entry name" value="Peptidase_aspartic_dom_sf"/>
</dbReference>
<dbReference type="PANTHER" id="PTHR47966">
    <property type="entry name" value="BETA-SITE APP-CLEAVING ENZYME, ISOFORM A-RELATED"/>
    <property type="match status" value="1"/>
</dbReference>
<dbReference type="PANTHER" id="PTHR47966:SF51">
    <property type="entry name" value="BETA-SITE APP-CLEAVING ENZYME, ISOFORM A-RELATED"/>
    <property type="match status" value="1"/>
</dbReference>
<dbReference type="Pfam" id="PF00026">
    <property type="entry name" value="Asp"/>
    <property type="match status" value="1"/>
</dbReference>
<dbReference type="PRINTS" id="PR00792">
    <property type="entry name" value="PEPSIN"/>
</dbReference>
<dbReference type="SUPFAM" id="SSF50630">
    <property type="entry name" value="Acid proteases"/>
    <property type="match status" value="1"/>
</dbReference>
<dbReference type="PROSITE" id="PS51767">
    <property type="entry name" value="PEPTIDASE_A1"/>
    <property type="match status" value="1"/>
</dbReference>
<proteinExistence type="inferred from homology"/>
<sequence>MLTIATLHVALQVFGAFSPSHAAAVTLEHRSARDGNSVAVPANWDVYGYLFNVTVGSPPQNITMLSDMTWMAPFVRSGRCLGQFNPELCVAQGQSFFNEHNSTTFANTTFAQATWPVTAFAPNFTVDYGRDKFCIGEICNKDTLMQVSDFPYPGSVVPVIPFGGIFGLAPTPEAITATSEPVNFQAWKNGKMGPLVGWHTCEVLKSAATCQGGDAQLVFGGTDTTMYSAKKLQSYEIQNPEWLSDAFYPSTPPRSNYWSTSLTGMWIRTDKLSKNYAVPFKAVKTAKRTPPLAVVDEGSEGLGAPLSLNGYKYLVRHIKSAKLASKAIVQNIQQQGSSGYNTADQDWYTVACDGLHEYPDLVYQLDGRKKYTISAGDYVTKLTDMPGSVCYLNINVWKYGRTENGDARVVLLGRAFLKRKYLVLNFEDRSFGLAPLRTG</sequence>